<dbReference type="EMBL" id="AF084056">
    <property type="protein sequence ID" value="AAD54433.1"/>
    <property type="molecule type" value="Genomic_DNA"/>
</dbReference>
<dbReference type="RefSeq" id="YP_007001316.1">
    <property type="nucleotide sequence ID" value="NC_019441.1"/>
</dbReference>
<dbReference type="SMR" id="Q9TDM7"/>
<dbReference type="GO" id="GO:0005743">
    <property type="term" value="C:mitochondrial inner membrane"/>
    <property type="evidence" value="ECO:0007669"/>
    <property type="project" value="UniProtKB-SubCell"/>
</dbReference>
<dbReference type="GO" id="GO:0045275">
    <property type="term" value="C:respiratory chain complex III"/>
    <property type="evidence" value="ECO:0007669"/>
    <property type="project" value="InterPro"/>
</dbReference>
<dbReference type="GO" id="GO:0046872">
    <property type="term" value="F:metal ion binding"/>
    <property type="evidence" value="ECO:0007669"/>
    <property type="project" value="UniProtKB-KW"/>
</dbReference>
<dbReference type="GO" id="GO:0008121">
    <property type="term" value="F:ubiquinol-cytochrome-c reductase activity"/>
    <property type="evidence" value="ECO:0007669"/>
    <property type="project" value="InterPro"/>
</dbReference>
<dbReference type="GO" id="GO:0006122">
    <property type="term" value="P:mitochondrial electron transport, ubiquinol to cytochrome c"/>
    <property type="evidence" value="ECO:0007669"/>
    <property type="project" value="TreeGrafter"/>
</dbReference>
<dbReference type="CDD" id="cd00290">
    <property type="entry name" value="cytochrome_b_C"/>
    <property type="match status" value="1"/>
</dbReference>
<dbReference type="CDD" id="cd00284">
    <property type="entry name" value="Cytochrome_b_N"/>
    <property type="match status" value="1"/>
</dbReference>
<dbReference type="FunFam" id="1.20.810.10:FF:000002">
    <property type="entry name" value="Cytochrome b"/>
    <property type="match status" value="1"/>
</dbReference>
<dbReference type="Gene3D" id="1.20.810.10">
    <property type="entry name" value="Cytochrome Bc1 Complex, Chain C"/>
    <property type="match status" value="1"/>
</dbReference>
<dbReference type="InterPro" id="IPR005798">
    <property type="entry name" value="Cyt_b/b6_C"/>
</dbReference>
<dbReference type="InterPro" id="IPR036150">
    <property type="entry name" value="Cyt_b/b6_C_sf"/>
</dbReference>
<dbReference type="InterPro" id="IPR005797">
    <property type="entry name" value="Cyt_b/b6_N"/>
</dbReference>
<dbReference type="InterPro" id="IPR027387">
    <property type="entry name" value="Cytb/b6-like_sf"/>
</dbReference>
<dbReference type="InterPro" id="IPR030689">
    <property type="entry name" value="Cytochrome_b"/>
</dbReference>
<dbReference type="InterPro" id="IPR048260">
    <property type="entry name" value="Cytochrome_b_C_euk/bac"/>
</dbReference>
<dbReference type="InterPro" id="IPR048259">
    <property type="entry name" value="Cytochrome_b_N_euk/bac"/>
</dbReference>
<dbReference type="InterPro" id="IPR016174">
    <property type="entry name" value="Di-haem_cyt_TM"/>
</dbReference>
<dbReference type="PANTHER" id="PTHR19271">
    <property type="entry name" value="CYTOCHROME B"/>
    <property type="match status" value="1"/>
</dbReference>
<dbReference type="PANTHER" id="PTHR19271:SF16">
    <property type="entry name" value="CYTOCHROME B"/>
    <property type="match status" value="1"/>
</dbReference>
<dbReference type="Pfam" id="PF00032">
    <property type="entry name" value="Cytochrom_B_C"/>
    <property type="match status" value="1"/>
</dbReference>
<dbReference type="Pfam" id="PF00033">
    <property type="entry name" value="Cytochrome_B"/>
    <property type="match status" value="1"/>
</dbReference>
<dbReference type="PIRSF" id="PIRSF038885">
    <property type="entry name" value="COB"/>
    <property type="match status" value="1"/>
</dbReference>
<dbReference type="SUPFAM" id="SSF81648">
    <property type="entry name" value="a domain/subunit of cytochrome bc1 complex (Ubiquinol-cytochrome c reductase)"/>
    <property type="match status" value="1"/>
</dbReference>
<dbReference type="SUPFAM" id="SSF81342">
    <property type="entry name" value="Transmembrane di-heme cytochromes"/>
    <property type="match status" value="1"/>
</dbReference>
<dbReference type="PROSITE" id="PS51003">
    <property type="entry name" value="CYTB_CTER"/>
    <property type="match status" value="1"/>
</dbReference>
<dbReference type="PROSITE" id="PS51002">
    <property type="entry name" value="CYTB_NTER"/>
    <property type="match status" value="1"/>
</dbReference>
<feature type="chain" id="PRO_0000254804" description="Cytochrome b">
    <location>
        <begin position="1"/>
        <end position="379"/>
    </location>
</feature>
<feature type="transmembrane region" description="Helical" evidence="2">
    <location>
        <begin position="33"/>
        <end position="53"/>
    </location>
</feature>
<feature type="transmembrane region" description="Helical" evidence="2">
    <location>
        <begin position="77"/>
        <end position="98"/>
    </location>
</feature>
<feature type="transmembrane region" description="Helical" evidence="2">
    <location>
        <begin position="113"/>
        <end position="133"/>
    </location>
</feature>
<feature type="transmembrane region" description="Helical" evidence="2">
    <location>
        <begin position="178"/>
        <end position="198"/>
    </location>
</feature>
<feature type="transmembrane region" description="Helical" evidence="2">
    <location>
        <begin position="226"/>
        <end position="246"/>
    </location>
</feature>
<feature type="transmembrane region" description="Helical" evidence="2">
    <location>
        <begin position="288"/>
        <end position="308"/>
    </location>
</feature>
<feature type="transmembrane region" description="Helical" evidence="2">
    <location>
        <begin position="320"/>
        <end position="340"/>
    </location>
</feature>
<feature type="transmembrane region" description="Helical" evidence="2">
    <location>
        <begin position="347"/>
        <end position="367"/>
    </location>
</feature>
<feature type="binding site" description="axial binding residue" evidence="2">
    <location>
        <position position="83"/>
    </location>
    <ligand>
        <name>heme b</name>
        <dbReference type="ChEBI" id="CHEBI:60344"/>
        <label>b562</label>
    </ligand>
    <ligandPart>
        <name>Fe</name>
        <dbReference type="ChEBI" id="CHEBI:18248"/>
    </ligandPart>
</feature>
<feature type="binding site" description="axial binding residue" evidence="2">
    <location>
        <position position="97"/>
    </location>
    <ligand>
        <name>heme b</name>
        <dbReference type="ChEBI" id="CHEBI:60344"/>
        <label>b566</label>
    </ligand>
    <ligandPart>
        <name>Fe</name>
        <dbReference type="ChEBI" id="CHEBI:18248"/>
    </ligandPart>
</feature>
<feature type="binding site" description="axial binding residue" evidence="2">
    <location>
        <position position="182"/>
    </location>
    <ligand>
        <name>heme b</name>
        <dbReference type="ChEBI" id="CHEBI:60344"/>
        <label>b562</label>
    </ligand>
    <ligandPart>
        <name>Fe</name>
        <dbReference type="ChEBI" id="CHEBI:18248"/>
    </ligandPart>
</feature>
<feature type="binding site" description="axial binding residue" evidence="2">
    <location>
        <position position="196"/>
    </location>
    <ligand>
        <name>heme b</name>
        <dbReference type="ChEBI" id="CHEBI:60344"/>
        <label>b566</label>
    </ligand>
    <ligandPart>
        <name>Fe</name>
        <dbReference type="ChEBI" id="CHEBI:18248"/>
    </ligandPart>
</feature>
<feature type="binding site" evidence="2">
    <location>
        <position position="201"/>
    </location>
    <ligand>
        <name>a ubiquinone</name>
        <dbReference type="ChEBI" id="CHEBI:16389"/>
    </ligand>
</feature>
<comment type="function">
    <text evidence="2">Component of the ubiquinol-cytochrome c reductase complex (complex III or cytochrome b-c1 complex) that is part of the mitochondrial respiratory chain. The b-c1 complex mediates electron transfer from ubiquinol to cytochrome c. Contributes to the generation of a proton gradient across the mitochondrial membrane that is then used for ATP synthesis.</text>
</comment>
<comment type="cofactor">
    <cofactor evidence="2">
        <name>heme b</name>
        <dbReference type="ChEBI" id="CHEBI:60344"/>
    </cofactor>
    <text evidence="2">Binds 2 heme b groups non-covalently.</text>
</comment>
<comment type="subunit">
    <text evidence="2">The cytochrome bc1 complex contains 11 subunits: 3 respiratory subunits (MT-CYB, CYC1 and UQCRFS1), 2 core proteins (UQCRC1 and UQCRC2) and 6 low-molecular weight proteins (UQCRH/QCR6, UQCRB/QCR7, UQCRQ/QCR8, UQCR10/QCR9, UQCR11/QCR10 and a cleavage product of UQCRFS1). This cytochrome bc1 complex then forms a dimer.</text>
</comment>
<comment type="subcellular location">
    <subcellularLocation>
        <location evidence="2">Mitochondrion inner membrane</location>
        <topology evidence="2">Multi-pass membrane protein</topology>
    </subcellularLocation>
</comment>
<comment type="miscellaneous">
    <text evidence="1">Heme 1 (or BL or b562) is low-potential and absorbs at about 562 nm, and heme 2 (or BH or b566) is high-potential and absorbs at about 566 nm.</text>
</comment>
<comment type="similarity">
    <text evidence="3 4">Belongs to the cytochrome b family.</text>
</comment>
<comment type="caution">
    <text evidence="2">The full-length protein contains only eight transmembrane helices, not nine as predicted by bioinformatics tools.</text>
</comment>
<reference key="1">
    <citation type="journal article" date="1999" name="Mar. Mamm. Sci.">
        <title>Phylogenetic relationships among the delphinid cetaceans based on full cytochrome b sequences.</title>
        <authorList>
            <person name="LeDuc R.G."/>
            <person name="Perrin W.F."/>
            <person name="Dizon A.E."/>
        </authorList>
    </citation>
    <scope>NUCLEOTIDE SEQUENCE [GENOMIC DNA]</scope>
</reference>
<evidence type="ECO:0000250" key="1"/>
<evidence type="ECO:0000250" key="2">
    <source>
        <dbReference type="UniProtKB" id="P00157"/>
    </source>
</evidence>
<evidence type="ECO:0000255" key="3">
    <source>
        <dbReference type="PROSITE-ProRule" id="PRU00967"/>
    </source>
</evidence>
<evidence type="ECO:0000255" key="4">
    <source>
        <dbReference type="PROSITE-ProRule" id="PRU00968"/>
    </source>
</evidence>
<protein>
    <recommendedName>
        <fullName>Cytochrome b</fullName>
    </recommendedName>
    <alternativeName>
        <fullName>Complex III subunit 3</fullName>
    </alternativeName>
    <alternativeName>
        <fullName>Complex III subunit III</fullName>
    </alternativeName>
    <alternativeName>
        <fullName>Cytochrome b-c1 complex subunit 3</fullName>
    </alternativeName>
    <alternativeName>
        <fullName>Ubiquinol-cytochrome-c reductase complex cytochrome b subunit</fullName>
    </alternativeName>
</protein>
<geneLocation type="mitochondrion"/>
<sequence>MTNIRKTHPLMKIINDTFIDLPTPSNISSWWNFGSLLGLCLIMQILTGLFLAMHYTPDTSTAFSSVAHICRDVNYGWFIRYLHANGASMFFICLYAHIGRSLYYGSYMFQETWNIGVLLLLTVMATAFVGYVLPWGQMSFWGATVITNLLSAIPYIGTTLVEWIWGGFSVDKATLTRFFAFHFILPFIITTLVAVHLLFLHETGSNNPMGIPSNMDMIPFHPYYTIKDILGALLLILALLTLTLFTPDLLGDPDNYTPANPLSTPAHIKPEWYFLFAYAILRSIPNKLGGVLALLLSILILIFIPMLQTSKQRSMMFRPFSQLLFWTLIADLLTLTWIGGQPVEHPYIIVGQLASILYFLLILVLMPTVSLIENKLLKW</sequence>
<name>CYB_GLOME</name>
<keyword id="KW-0249">Electron transport</keyword>
<keyword id="KW-0349">Heme</keyword>
<keyword id="KW-0408">Iron</keyword>
<keyword id="KW-0472">Membrane</keyword>
<keyword id="KW-0479">Metal-binding</keyword>
<keyword id="KW-0496">Mitochondrion</keyword>
<keyword id="KW-0999">Mitochondrion inner membrane</keyword>
<keyword id="KW-0679">Respiratory chain</keyword>
<keyword id="KW-0812">Transmembrane</keyword>
<keyword id="KW-1133">Transmembrane helix</keyword>
<keyword id="KW-0813">Transport</keyword>
<keyword id="KW-0830">Ubiquinone</keyword>
<organism>
    <name type="scientific">Globicephala melas</name>
    <name type="common">Long-finned pilot whale</name>
    <name type="synonym">Globicephala melaena</name>
    <dbReference type="NCBI Taxonomy" id="9731"/>
    <lineage>
        <taxon>Eukaryota</taxon>
        <taxon>Metazoa</taxon>
        <taxon>Chordata</taxon>
        <taxon>Craniata</taxon>
        <taxon>Vertebrata</taxon>
        <taxon>Euteleostomi</taxon>
        <taxon>Mammalia</taxon>
        <taxon>Eutheria</taxon>
        <taxon>Laurasiatheria</taxon>
        <taxon>Artiodactyla</taxon>
        <taxon>Whippomorpha</taxon>
        <taxon>Cetacea</taxon>
        <taxon>Odontoceti</taxon>
        <taxon>Delphinidae</taxon>
        <taxon>Globicephala</taxon>
    </lineage>
</organism>
<accession>Q9TDM7</accession>
<gene>
    <name type="primary">MT-CYB</name>
    <name type="synonym">COB</name>
    <name type="synonym">CYTB</name>
    <name type="synonym">MTCYB</name>
</gene>
<proteinExistence type="inferred from homology"/>